<keyword id="KW-0378">Hydrolase</keyword>
<keyword id="KW-0479">Metal-binding</keyword>
<keyword id="KW-0554">One-carbon metabolism</keyword>
<keyword id="KW-1185">Reference proteome</keyword>
<keyword id="KW-0862">Zinc</keyword>
<feature type="chain" id="PRO_1000190080" description="GTP cyclohydrolase 1">
    <location>
        <begin position="1"/>
        <end position="204"/>
    </location>
</feature>
<feature type="binding site" evidence="1">
    <location>
        <position position="92"/>
    </location>
    <ligand>
        <name>Zn(2+)</name>
        <dbReference type="ChEBI" id="CHEBI:29105"/>
    </ligand>
</feature>
<feature type="binding site" evidence="1">
    <location>
        <position position="95"/>
    </location>
    <ligand>
        <name>Zn(2+)</name>
        <dbReference type="ChEBI" id="CHEBI:29105"/>
    </ligand>
</feature>
<feature type="binding site" evidence="1">
    <location>
        <position position="165"/>
    </location>
    <ligand>
        <name>Zn(2+)</name>
        <dbReference type="ChEBI" id="CHEBI:29105"/>
    </ligand>
</feature>
<protein>
    <recommendedName>
        <fullName evidence="1">GTP cyclohydrolase 1</fullName>
        <ecNumber evidence="1">3.5.4.16</ecNumber>
    </recommendedName>
    <alternativeName>
        <fullName evidence="1">GTP cyclohydrolase I</fullName>
        <shortName evidence="1">GTP-CH-I</shortName>
    </alternativeName>
</protein>
<proteinExistence type="inferred from homology"/>
<reference key="1">
    <citation type="journal article" date="2005" name="Proc. Natl. Acad. Sci. U.S.A.">
        <title>The complete genome sequence of Mycobacterium avium subspecies paratuberculosis.</title>
        <authorList>
            <person name="Li L."/>
            <person name="Bannantine J.P."/>
            <person name="Zhang Q."/>
            <person name="Amonsin A."/>
            <person name="May B.J."/>
            <person name="Alt D."/>
            <person name="Banerji N."/>
            <person name="Kanjilal S."/>
            <person name="Kapur V."/>
        </authorList>
    </citation>
    <scope>NUCLEOTIDE SEQUENCE [LARGE SCALE GENOMIC DNA]</scope>
    <source>
        <strain>ATCC BAA-968 / K-10</strain>
    </source>
</reference>
<evidence type="ECO:0000255" key="1">
    <source>
        <dbReference type="HAMAP-Rule" id="MF_00223"/>
    </source>
</evidence>
<organism>
    <name type="scientific">Mycolicibacterium paratuberculosis (strain ATCC BAA-968 / K-10)</name>
    <name type="common">Mycobacterium paratuberculosis</name>
    <dbReference type="NCBI Taxonomy" id="262316"/>
    <lineage>
        <taxon>Bacteria</taxon>
        <taxon>Bacillati</taxon>
        <taxon>Actinomycetota</taxon>
        <taxon>Actinomycetes</taxon>
        <taxon>Mycobacteriales</taxon>
        <taxon>Mycobacteriaceae</taxon>
        <taxon>Mycobacterium</taxon>
        <taxon>Mycobacterium avium complex (MAC)</taxon>
    </lineage>
</organism>
<accession>Q743Z2</accession>
<sequence>MAGNGSAPDTATHQVRQFDQARAEAAVRELLFAIGEDPDRHGLAETPARVARAYREMFAGLYTDPDSVLNTMFDEEHDELVLVKEIPLYSTCEHHLVSFHGVAHVGYIPGNDGRVTGLSKIARLVDLYAKRPQVQERLTSQIADALVKKLNPRGVIVVVEAEHLCMAMRGVRKPGAVTTTSAVRGLFKTNAASRAEALDLILRK</sequence>
<comment type="catalytic activity">
    <reaction evidence="1">
        <text>GTP + H2O = 7,8-dihydroneopterin 3'-triphosphate + formate + H(+)</text>
        <dbReference type="Rhea" id="RHEA:17473"/>
        <dbReference type="ChEBI" id="CHEBI:15377"/>
        <dbReference type="ChEBI" id="CHEBI:15378"/>
        <dbReference type="ChEBI" id="CHEBI:15740"/>
        <dbReference type="ChEBI" id="CHEBI:37565"/>
        <dbReference type="ChEBI" id="CHEBI:58462"/>
        <dbReference type="EC" id="3.5.4.16"/>
    </reaction>
</comment>
<comment type="pathway">
    <text evidence="1">Cofactor biosynthesis; 7,8-dihydroneopterin triphosphate biosynthesis; 7,8-dihydroneopterin triphosphate from GTP: step 1/1.</text>
</comment>
<comment type="subunit">
    <text evidence="1">Homomer.</text>
</comment>
<comment type="similarity">
    <text evidence="1">Belongs to the GTP cyclohydrolase I family.</text>
</comment>
<gene>
    <name evidence="1" type="primary">folE</name>
    <name type="ordered locus">MAP_0449</name>
</gene>
<name>GCH1_MYCPA</name>
<dbReference type="EC" id="3.5.4.16" evidence="1"/>
<dbReference type="EMBL" id="AE016958">
    <property type="protein sequence ID" value="AAS02766.1"/>
    <property type="molecule type" value="Genomic_DNA"/>
</dbReference>
<dbReference type="RefSeq" id="WP_003877099.1">
    <property type="nucleotide sequence ID" value="NZ_CP106873.1"/>
</dbReference>
<dbReference type="SMR" id="Q743Z2"/>
<dbReference type="STRING" id="262316.MAP_0449"/>
<dbReference type="GeneID" id="75268396"/>
<dbReference type="KEGG" id="mpa:MAP_0449"/>
<dbReference type="eggNOG" id="COG0302">
    <property type="taxonomic scope" value="Bacteria"/>
</dbReference>
<dbReference type="HOGENOM" id="CLU_049768_3_3_11"/>
<dbReference type="UniPathway" id="UPA00848">
    <property type="reaction ID" value="UER00151"/>
</dbReference>
<dbReference type="Proteomes" id="UP000000580">
    <property type="component" value="Chromosome"/>
</dbReference>
<dbReference type="GO" id="GO:0005737">
    <property type="term" value="C:cytoplasm"/>
    <property type="evidence" value="ECO:0007669"/>
    <property type="project" value="TreeGrafter"/>
</dbReference>
<dbReference type="GO" id="GO:0005525">
    <property type="term" value="F:GTP binding"/>
    <property type="evidence" value="ECO:0007669"/>
    <property type="project" value="TreeGrafter"/>
</dbReference>
<dbReference type="GO" id="GO:0003934">
    <property type="term" value="F:GTP cyclohydrolase I activity"/>
    <property type="evidence" value="ECO:0007669"/>
    <property type="project" value="UniProtKB-UniRule"/>
</dbReference>
<dbReference type="GO" id="GO:0008270">
    <property type="term" value="F:zinc ion binding"/>
    <property type="evidence" value="ECO:0007669"/>
    <property type="project" value="UniProtKB-UniRule"/>
</dbReference>
<dbReference type="GO" id="GO:0006730">
    <property type="term" value="P:one-carbon metabolic process"/>
    <property type="evidence" value="ECO:0007669"/>
    <property type="project" value="UniProtKB-UniRule"/>
</dbReference>
<dbReference type="GO" id="GO:0006729">
    <property type="term" value="P:tetrahydrobiopterin biosynthetic process"/>
    <property type="evidence" value="ECO:0007669"/>
    <property type="project" value="TreeGrafter"/>
</dbReference>
<dbReference type="GO" id="GO:0046654">
    <property type="term" value="P:tetrahydrofolate biosynthetic process"/>
    <property type="evidence" value="ECO:0007669"/>
    <property type="project" value="UniProtKB-UniRule"/>
</dbReference>
<dbReference type="FunFam" id="1.10.286.10:FF:000001">
    <property type="entry name" value="GTP cyclohydrolase 1"/>
    <property type="match status" value="1"/>
</dbReference>
<dbReference type="FunFam" id="3.30.1130.10:FF:000001">
    <property type="entry name" value="GTP cyclohydrolase 1"/>
    <property type="match status" value="1"/>
</dbReference>
<dbReference type="Gene3D" id="1.10.286.10">
    <property type="match status" value="1"/>
</dbReference>
<dbReference type="Gene3D" id="3.30.1130.10">
    <property type="match status" value="1"/>
</dbReference>
<dbReference type="HAMAP" id="MF_00223">
    <property type="entry name" value="FolE"/>
    <property type="match status" value="1"/>
</dbReference>
<dbReference type="InterPro" id="IPR043133">
    <property type="entry name" value="GTP-CH-I_C/QueF"/>
</dbReference>
<dbReference type="InterPro" id="IPR043134">
    <property type="entry name" value="GTP-CH-I_N"/>
</dbReference>
<dbReference type="InterPro" id="IPR001474">
    <property type="entry name" value="GTP_CycHdrlase_I"/>
</dbReference>
<dbReference type="InterPro" id="IPR018234">
    <property type="entry name" value="GTP_CycHdrlase_I_CS"/>
</dbReference>
<dbReference type="InterPro" id="IPR020602">
    <property type="entry name" value="GTP_CycHdrlase_I_dom"/>
</dbReference>
<dbReference type="NCBIfam" id="TIGR00063">
    <property type="entry name" value="folE"/>
    <property type="match status" value="1"/>
</dbReference>
<dbReference type="NCBIfam" id="NF006825">
    <property type="entry name" value="PRK09347.1-2"/>
    <property type="match status" value="1"/>
</dbReference>
<dbReference type="NCBIfam" id="NF006826">
    <property type="entry name" value="PRK09347.1-3"/>
    <property type="match status" value="1"/>
</dbReference>
<dbReference type="PANTHER" id="PTHR11109:SF7">
    <property type="entry name" value="GTP CYCLOHYDROLASE 1"/>
    <property type="match status" value="1"/>
</dbReference>
<dbReference type="PANTHER" id="PTHR11109">
    <property type="entry name" value="GTP CYCLOHYDROLASE I"/>
    <property type="match status" value="1"/>
</dbReference>
<dbReference type="Pfam" id="PF01227">
    <property type="entry name" value="GTP_cyclohydroI"/>
    <property type="match status" value="1"/>
</dbReference>
<dbReference type="SUPFAM" id="SSF55620">
    <property type="entry name" value="Tetrahydrobiopterin biosynthesis enzymes-like"/>
    <property type="match status" value="1"/>
</dbReference>
<dbReference type="PROSITE" id="PS00859">
    <property type="entry name" value="GTP_CYCLOHYDROL_1_1"/>
    <property type="match status" value="1"/>
</dbReference>
<dbReference type="PROSITE" id="PS00860">
    <property type="entry name" value="GTP_CYCLOHYDROL_1_2"/>
    <property type="match status" value="1"/>
</dbReference>